<name>TNAA_VIBC3</name>
<accession>A5EYI0</accession>
<accession>C3M7K1</accession>
<protein>
    <recommendedName>
        <fullName evidence="1">Tryptophanase</fullName>
        <ecNumber evidence="1">4.1.99.1</ecNumber>
    </recommendedName>
    <alternativeName>
        <fullName evidence="1">L-tryptophan indole-lyase</fullName>
        <shortName evidence="1">TNase</shortName>
    </alternativeName>
</protein>
<organism>
    <name type="scientific">Vibrio cholerae serotype O1 (strain ATCC 39541 / Classical Ogawa 395 / O395)</name>
    <dbReference type="NCBI Taxonomy" id="345073"/>
    <lineage>
        <taxon>Bacteria</taxon>
        <taxon>Pseudomonadati</taxon>
        <taxon>Pseudomonadota</taxon>
        <taxon>Gammaproteobacteria</taxon>
        <taxon>Vibrionales</taxon>
        <taxon>Vibrionaceae</taxon>
        <taxon>Vibrio</taxon>
    </lineage>
</organism>
<sequence length="472" mass="52934">MENFKHLPEPFRIRVIEPVKRTTREYREKAILNAGMNPFLLDSEDVFIDLLTDSGTGAITQEMQAAMFRGDEAYSGSRSYHALARAVKDIFGYEYTIPTHQGRGAEQIYIPVLIKKREKEKGLDRSKMVALSNYFFDTTQGHTQINCCVAKNVYTEEAFDTGVKADFKGNFDLEKLEQAILEAGPANVPYIVSTITCNSAGGQPVSIANLKAVYEIAQRYDIPVIMDSARFAENAYFIQQRERDYRNWSIEEITREAYKYADGLAMSAKKDAMVQMGGLLCFKDESFFDVYTECRTLCLVQEGFPTYGGLEGGAMERLAVGLYDGMRQDWLAYRINQVEYLVNGLEAIGVICQQAGGHAAFVDAGKLLPHIPADQFPAHALACELYKVAGIRAVEIGSLLLGRDPATGKQHPCPAELLRLTIPRATYTQTHMDFIIEAFEKVKANARNVKGLEFTYEPPVLRHFTARLKEKA</sequence>
<keyword id="KW-0456">Lyase</keyword>
<keyword id="KW-0663">Pyridoxal phosphate</keyword>
<keyword id="KW-0823">Tryptophan catabolism</keyword>
<gene>
    <name evidence="1" type="primary">tnaA</name>
    <name type="ordered locus">VC0395_1117</name>
    <name type="ordered locus">VC395_A0154</name>
</gene>
<evidence type="ECO:0000255" key="1">
    <source>
        <dbReference type="HAMAP-Rule" id="MF_00544"/>
    </source>
</evidence>
<comment type="catalytic activity">
    <reaction evidence="1">
        <text>L-tryptophan + H2O = indole + pyruvate + NH4(+)</text>
        <dbReference type="Rhea" id="RHEA:19553"/>
        <dbReference type="ChEBI" id="CHEBI:15361"/>
        <dbReference type="ChEBI" id="CHEBI:15377"/>
        <dbReference type="ChEBI" id="CHEBI:16881"/>
        <dbReference type="ChEBI" id="CHEBI:28938"/>
        <dbReference type="ChEBI" id="CHEBI:57912"/>
        <dbReference type="EC" id="4.1.99.1"/>
    </reaction>
</comment>
<comment type="cofactor">
    <cofactor evidence="1">
        <name>pyridoxal 5'-phosphate</name>
        <dbReference type="ChEBI" id="CHEBI:597326"/>
    </cofactor>
</comment>
<comment type="pathway">
    <text evidence="1">Amino-acid degradation; L-tryptophan degradation via pyruvate pathway; indole and pyruvate from L-tryptophan: step 1/1.</text>
</comment>
<comment type="subunit">
    <text evidence="1">Homotetramer.</text>
</comment>
<comment type="similarity">
    <text evidence="1">Belongs to the beta-eliminating lyase family.</text>
</comment>
<feature type="chain" id="PRO_1000072551" description="Tryptophanase">
    <location>
        <begin position="1"/>
        <end position="472"/>
    </location>
</feature>
<feature type="modified residue" description="N6-(pyridoxal phosphate)lysine" evidence="1">
    <location>
        <position position="270"/>
    </location>
</feature>
<reference key="1">
    <citation type="submission" date="2007-03" db="EMBL/GenBank/DDBJ databases">
        <authorList>
            <person name="Heidelberg J."/>
        </authorList>
    </citation>
    <scope>NUCLEOTIDE SEQUENCE [LARGE SCALE GENOMIC DNA]</scope>
    <source>
        <strain>ATCC 39541 / Classical Ogawa 395 / O395</strain>
    </source>
</reference>
<reference key="2">
    <citation type="journal article" date="2008" name="PLoS ONE">
        <title>A recalibrated molecular clock and independent origins for the cholera pandemic clones.</title>
        <authorList>
            <person name="Feng L."/>
            <person name="Reeves P.R."/>
            <person name="Lan R."/>
            <person name="Ren Y."/>
            <person name="Gao C."/>
            <person name="Zhou Z."/>
            <person name="Ren Y."/>
            <person name="Cheng J."/>
            <person name="Wang W."/>
            <person name="Wang J."/>
            <person name="Qian W."/>
            <person name="Li D."/>
            <person name="Wang L."/>
        </authorList>
    </citation>
    <scope>NUCLEOTIDE SEQUENCE [LARGE SCALE GENOMIC DNA]</scope>
    <source>
        <strain>ATCC 39541 / Classical Ogawa 395 / O395</strain>
    </source>
</reference>
<proteinExistence type="inferred from homology"/>
<dbReference type="EC" id="4.1.99.1" evidence="1"/>
<dbReference type="EMBL" id="CP000626">
    <property type="protein sequence ID" value="ABQ18443.1"/>
    <property type="molecule type" value="Genomic_DNA"/>
</dbReference>
<dbReference type="EMBL" id="CP001236">
    <property type="protein sequence ID" value="ACP10997.1"/>
    <property type="molecule type" value="Genomic_DNA"/>
</dbReference>
<dbReference type="RefSeq" id="WP_000427052.1">
    <property type="nucleotide sequence ID" value="NZ_JAACZH010000004.1"/>
</dbReference>
<dbReference type="SMR" id="A5EYI0"/>
<dbReference type="KEGG" id="vco:VC0395_1117"/>
<dbReference type="KEGG" id="vcr:VC395_A0154"/>
<dbReference type="PATRIC" id="fig|345073.21.peg.2912"/>
<dbReference type="eggNOG" id="COG3033">
    <property type="taxonomic scope" value="Bacteria"/>
</dbReference>
<dbReference type="HOGENOM" id="CLU_047223_0_0_6"/>
<dbReference type="OrthoDB" id="9764079at2"/>
<dbReference type="BRENDA" id="4.1.99.1">
    <property type="organism ID" value="15003"/>
</dbReference>
<dbReference type="UniPathway" id="UPA00332">
    <property type="reaction ID" value="UER00452"/>
</dbReference>
<dbReference type="Proteomes" id="UP000000249">
    <property type="component" value="Chromosome 1"/>
</dbReference>
<dbReference type="GO" id="GO:0009034">
    <property type="term" value="F:tryptophanase activity"/>
    <property type="evidence" value="ECO:0007669"/>
    <property type="project" value="UniProtKB-UniRule"/>
</dbReference>
<dbReference type="FunFam" id="3.40.640.10:FF:000039">
    <property type="entry name" value="Tryptophanase"/>
    <property type="match status" value="1"/>
</dbReference>
<dbReference type="Gene3D" id="3.90.1150.10">
    <property type="entry name" value="Aspartate Aminotransferase, domain 1"/>
    <property type="match status" value="1"/>
</dbReference>
<dbReference type="Gene3D" id="3.40.640.10">
    <property type="entry name" value="Type I PLP-dependent aspartate aminotransferase-like (Major domain)"/>
    <property type="match status" value="1"/>
</dbReference>
<dbReference type="HAMAP" id="MF_00544">
    <property type="entry name" value="Tryptophanase"/>
    <property type="match status" value="1"/>
</dbReference>
<dbReference type="InterPro" id="IPR001597">
    <property type="entry name" value="ArAA_b-elim_lyase/Thr_aldolase"/>
</dbReference>
<dbReference type="InterPro" id="IPR011166">
    <property type="entry name" value="Beta-eliminating_lyase"/>
</dbReference>
<dbReference type="InterPro" id="IPR015424">
    <property type="entry name" value="PyrdxlP-dep_Trfase"/>
</dbReference>
<dbReference type="InterPro" id="IPR015421">
    <property type="entry name" value="PyrdxlP-dep_Trfase_major"/>
</dbReference>
<dbReference type="InterPro" id="IPR015422">
    <property type="entry name" value="PyrdxlP-dep_Trfase_small"/>
</dbReference>
<dbReference type="InterPro" id="IPR013440">
    <property type="entry name" value="TNase"/>
</dbReference>
<dbReference type="InterPro" id="IPR018176">
    <property type="entry name" value="Tryptophanase_CS"/>
</dbReference>
<dbReference type="NCBIfam" id="NF009709">
    <property type="entry name" value="PRK13238.1"/>
    <property type="match status" value="1"/>
</dbReference>
<dbReference type="NCBIfam" id="TIGR02617">
    <property type="entry name" value="tnaA_trp_ase"/>
    <property type="match status" value="1"/>
</dbReference>
<dbReference type="PANTHER" id="PTHR32325">
    <property type="entry name" value="BETA-ELIMINATING LYASE-LIKE PROTEIN-RELATED"/>
    <property type="match status" value="1"/>
</dbReference>
<dbReference type="PANTHER" id="PTHR32325:SF4">
    <property type="entry name" value="TRYPTOPHANASE"/>
    <property type="match status" value="1"/>
</dbReference>
<dbReference type="Pfam" id="PF01212">
    <property type="entry name" value="Beta_elim_lyase"/>
    <property type="match status" value="1"/>
</dbReference>
<dbReference type="PIRSF" id="PIRSF001386">
    <property type="entry name" value="Trpase"/>
    <property type="match status" value="1"/>
</dbReference>
<dbReference type="SUPFAM" id="SSF53383">
    <property type="entry name" value="PLP-dependent transferases"/>
    <property type="match status" value="1"/>
</dbReference>
<dbReference type="PROSITE" id="PS00853">
    <property type="entry name" value="BETA_ELIM_LYASE"/>
    <property type="match status" value="1"/>
</dbReference>